<keyword id="KW-0004">4Fe-4S</keyword>
<keyword id="KW-0408">Iron</keyword>
<keyword id="KW-0411">Iron-sulfur</keyword>
<keyword id="KW-0414">Isoprene biosynthesis</keyword>
<keyword id="KW-0479">Metal-binding</keyword>
<keyword id="KW-0560">Oxidoreductase</keyword>
<keyword id="KW-1185">Reference proteome</keyword>
<protein>
    <recommendedName>
        <fullName evidence="1">4-hydroxy-3-methylbut-2-en-1-yl diphosphate synthase (flavodoxin)</fullName>
        <ecNumber evidence="1">1.17.7.3</ecNumber>
    </recommendedName>
    <alternativeName>
        <fullName evidence="1">1-hydroxy-2-methyl-2-(E)-butenyl 4-diphosphate synthase</fullName>
    </alternativeName>
</protein>
<gene>
    <name evidence="1" type="primary">ispG</name>
    <name type="ordered locus">FN0478</name>
</gene>
<proteinExistence type="inferred from homology"/>
<sequence>MERNTRVVKVANLKIGGNNPIIIQSMTNTNSADVEATVKQINNLEKVGCQLVRMTINNIKAAEAIKEIKKKVSLPLVADIHFDYRLALLAIKNGIDKLRINPGNIGSDENVKKVVEAAKEKNIPIRIGVNSGSIEKEILEKYGKPCVDALVESAMYHIRLLEKFDFFDIIVSLKSSNVKMMVEAYRKISSLVDYPLHLGVTEAGTKFQGTVKSAIGIGALLVDGIGDTLRVSLTENPVEEIKVAKEILKVLDLSDEGVEIISCPTCGRTEIDLIGLAKQVEEEFRTKKNKFKIAVMGCVVNGPGEAREADYGIAAGRGIGILFKKGEIIKKVSESNLLEELKKMISEDLENKKD</sequence>
<feature type="chain" id="PRO_0000190579" description="4-hydroxy-3-methylbut-2-en-1-yl diphosphate synthase (flavodoxin)">
    <location>
        <begin position="1"/>
        <end position="354"/>
    </location>
</feature>
<feature type="binding site" evidence="1">
    <location>
        <position position="263"/>
    </location>
    <ligand>
        <name>[4Fe-4S] cluster</name>
        <dbReference type="ChEBI" id="CHEBI:49883"/>
    </ligand>
</feature>
<feature type="binding site" evidence="1">
    <location>
        <position position="266"/>
    </location>
    <ligand>
        <name>[4Fe-4S] cluster</name>
        <dbReference type="ChEBI" id="CHEBI:49883"/>
    </ligand>
</feature>
<feature type="binding site" evidence="1">
    <location>
        <position position="298"/>
    </location>
    <ligand>
        <name>[4Fe-4S] cluster</name>
        <dbReference type="ChEBI" id="CHEBI:49883"/>
    </ligand>
</feature>
<feature type="binding site" evidence="1">
    <location>
        <position position="305"/>
    </location>
    <ligand>
        <name>[4Fe-4S] cluster</name>
        <dbReference type="ChEBI" id="CHEBI:49883"/>
    </ligand>
</feature>
<dbReference type="EC" id="1.17.7.3" evidence="1"/>
<dbReference type="EMBL" id="AE009951">
    <property type="protein sequence ID" value="AAL94674.1"/>
    <property type="molecule type" value="Genomic_DNA"/>
</dbReference>
<dbReference type="RefSeq" id="NP_603375.1">
    <property type="nucleotide sequence ID" value="NC_003454.1"/>
</dbReference>
<dbReference type="RefSeq" id="WP_005902396.1">
    <property type="nucleotide sequence ID" value="NZ_OZ209243.1"/>
</dbReference>
<dbReference type="SMR" id="Q8RG40"/>
<dbReference type="FunCoup" id="Q8RG40">
    <property type="interactions" value="191"/>
</dbReference>
<dbReference type="STRING" id="190304.FN0478"/>
<dbReference type="PaxDb" id="190304-FN0478"/>
<dbReference type="DNASU" id="992576"/>
<dbReference type="EnsemblBacteria" id="AAL94674">
    <property type="protein sequence ID" value="AAL94674"/>
    <property type="gene ID" value="FN0478"/>
</dbReference>
<dbReference type="GeneID" id="79783486"/>
<dbReference type="KEGG" id="fnu:FN0478"/>
<dbReference type="PATRIC" id="fig|190304.8.peg.1048"/>
<dbReference type="eggNOG" id="COG0821">
    <property type="taxonomic scope" value="Bacteria"/>
</dbReference>
<dbReference type="HOGENOM" id="CLU_042258_0_0_0"/>
<dbReference type="InParanoid" id="Q8RG40"/>
<dbReference type="BioCyc" id="FNUC190304:G1FZS-1071-MONOMER"/>
<dbReference type="UniPathway" id="UPA00056">
    <property type="reaction ID" value="UER00096"/>
</dbReference>
<dbReference type="Proteomes" id="UP000002521">
    <property type="component" value="Chromosome"/>
</dbReference>
<dbReference type="GO" id="GO:0051539">
    <property type="term" value="F:4 iron, 4 sulfur cluster binding"/>
    <property type="evidence" value="ECO:0007669"/>
    <property type="project" value="UniProtKB-UniRule"/>
</dbReference>
<dbReference type="GO" id="GO:0046429">
    <property type="term" value="F:4-hydroxy-3-methylbut-2-en-1-yl diphosphate synthase activity (ferredoxin)"/>
    <property type="evidence" value="ECO:0000318"/>
    <property type="project" value="GO_Central"/>
</dbReference>
<dbReference type="GO" id="GO:0141197">
    <property type="term" value="F:4-hydroxy-3-methylbut-2-enyl-diphosphate synthase activity (flavodoxin)"/>
    <property type="evidence" value="ECO:0007669"/>
    <property type="project" value="UniProtKB-EC"/>
</dbReference>
<dbReference type="GO" id="GO:0005506">
    <property type="term" value="F:iron ion binding"/>
    <property type="evidence" value="ECO:0007669"/>
    <property type="project" value="InterPro"/>
</dbReference>
<dbReference type="GO" id="GO:0019288">
    <property type="term" value="P:isopentenyl diphosphate biosynthetic process, methylerythritol 4-phosphate pathway"/>
    <property type="evidence" value="ECO:0000318"/>
    <property type="project" value="GO_Central"/>
</dbReference>
<dbReference type="GO" id="GO:0016114">
    <property type="term" value="P:terpenoid biosynthetic process"/>
    <property type="evidence" value="ECO:0007669"/>
    <property type="project" value="InterPro"/>
</dbReference>
<dbReference type="FunFam" id="3.20.20.20:FF:000001">
    <property type="entry name" value="4-hydroxy-3-methylbut-2-en-1-yl diphosphate synthase (flavodoxin)"/>
    <property type="match status" value="1"/>
</dbReference>
<dbReference type="FunFam" id="3.30.413.10:FF:000005">
    <property type="entry name" value="4-hydroxy-3-methylbut-2-en-1-yl diphosphate synthase (flavodoxin)"/>
    <property type="match status" value="1"/>
</dbReference>
<dbReference type="Gene3D" id="3.20.20.20">
    <property type="entry name" value="Dihydropteroate synthase-like"/>
    <property type="match status" value="1"/>
</dbReference>
<dbReference type="Gene3D" id="3.30.413.10">
    <property type="entry name" value="Sulfite Reductase Hemoprotein, domain 1"/>
    <property type="match status" value="1"/>
</dbReference>
<dbReference type="HAMAP" id="MF_00159">
    <property type="entry name" value="IspG"/>
    <property type="match status" value="1"/>
</dbReference>
<dbReference type="InterPro" id="IPR011005">
    <property type="entry name" value="Dihydropteroate_synth-like_sf"/>
</dbReference>
<dbReference type="InterPro" id="IPR016425">
    <property type="entry name" value="IspG_bac"/>
</dbReference>
<dbReference type="InterPro" id="IPR004588">
    <property type="entry name" value="IspG_bac-typ"/>
</dbReference>
<dbReference type="InterPro" id="IPR045854">
    <property type="entry name" value="NO2/SO3_Rdtase_4Fe4S_sf"/>
</dbReference>
<dbReference type="NCBIfam" id="TIGR00612">
    <property type="entry name" value="ispG_gcpE"/>
    <property type="match status" value="1"/>
</dbReference>
<dbReference type="NCBIfam" id="NF001540">
    <property type="entry name" value="PRK00366.1"/>
    <property type="match status" value="1"/>
</dbReference>
<dbReference type="PANTHER" id="PTHR30454">
    <property type="entry name" value="4-HYDROXY-3-METHYLBUT-2-EN-1-YL DIPHOSPHATE SYNTHASE"/>
    <property type="match status" value="1"/>
</dbReference>
<dbReference type="PANTHER" id="PTHR30454:SF0">
    <property type="entry name" value="4-HYDROXY-3-METHYLBUT-2-EN-1-YL DIPHOSPHATE SYNTHASE (FERREDOXIN), CHLOROPLASTIC"/>
    <property type="match status" value="1"/>
</dbReference>
<dbReference type="Pfam" id="PF04551">
    <property type="entry name" value="GcpE"/>
    <property type="match status" value="1"/>
</dbReference>
<dbReference type="PIRSF" id="PIRSF004640">
    <property type="entry name" value="IspG"/>
    <property type="match status" value="1"/>
</dbReference>
<dbReference type="SUPFAM" id="SSF51717">
    <property type="entry name" value="Dihydropteroate synthetase-like"/>
    <property type="match status" value="1"/>
</dbReference>
<dbReference type="SUPFAM" id="SSF56014">
    <property type="entry name" value="Nitrite and sulphite reductase 4Fe-4S domain-like"/>
    <property type="match status" value="1"/>
</dbReference>
<comment type="function">
    <text evidence="1">Converts 2C-methyl-D-erythritol 2,4-cyclodiphosphate (ME-2,4cPP) into 1-hydroxy-2-methyl-2-(E)-butenyl 4-diphosphate.</text>
</comment>
<comment type="catalytic activity">
    <reaction evidence="1">
        <text>(2E)-4-hydroxy-3-methylbut-2-enyl diphosphate + oxidized [flavodoxin] + H2O + 2 H(+) = 2-C-methyl-D-erythritol 2,4-cyclic diphosphate + reduced [flavodoxin]</text>
        <dbReference type="Rhea" id="RHEA:43604"/>
        <dbReference type="Rhea" id="RHEA-COMP:10622"/>
        <dbReference type="Rhea" id="RHEA-COMP:10623"/>
        <dbReference type="ChEBI" id="CHEBI:15377"/>
        <dbReference type="ChEBI" id="CHEBI:15378"/>
        <dbReference type="ChEBI" id="CHEBI:57618"/>
        <dbReference type="ChEBI" id="CHEBI:58210"/>
        <dbReference type="ChEBI" id="CHEBI:58483"/>
        <dbReference type="ChEBI" id="CHEBI:128753"/>
        <dbReference type="EC" id="1.17.7.3"/>
    </reaction>
</comment>
<comment type="cofactor">
    <cofactor evidence="1">
        <name>[4Fe-4S] cluster</name>
        <dbReference type="ChEBI" id="CHEBI:49883"/>
    </cofactor>
    <text evidence="1">Binds 1 [4Fe-4S] cluster.</text>
</comment>
<comment type="pathway">
    <text evidence="1">Isoprenoid biosynthesis; isopentenyl diphosphate biosynthesis via DXP pathway; isopentenyl diphosphate from 1-deoxy-D-xylulose 5-phosphate: step 5/6.</text>
</comment>
<comment type="similarity">
    <text evidence="1">Belongs to the IspG family.</text>
</comment>
<reference key="1">
    <citation type="journal article" date="2002" name="J. Bacteriol.">
        <title>Genome sequence and analysis of the oral bacterium Fusobacterium nucleatum strain ATCC 25586.</title>
        <authorList>
            <person name="Kapatral V."/>
            <person name="Anderson I."/>
            <person name="Ivanova N."/>
            <person name="Reznik G."/>
            <person name="Los T."/>
            <person name="Lykidis A."/>
            <person name="Bhattacharyya A."/>
            <person name="Bartman A."/>
            <person name="Gardner W."/>
            <person name="Grechkin G."/>
            <person name="Zhu L."/>
            <person name="Vasieva O."/>
            <person name="Chu L."/>
            <person name="Kogan Y."/>
            <person name="Chaga O."/>
            <person name="Goltsman E."/>
            <person name="Bernal A."/>
            <person name="Larsen N."/>
            <person name="D'Souza M."/>
            <person name="Walunas T."/>
            <person name="Pusch G."/>
            <person name="Haselkorn R."/>
            <person name="Fonstein M."/>
            <person name="Kyrpides N.C."/>
            <person name="Overbeek R."/>
        </authorList>
    </citation>
    <scope>NUCLEOTIDE SEQUENCE [LARGE SCALE GENOMIC DNA]</scope>
    <source>
        <strain>ATCC 25586 / DSM 15643 / BCRC 10681 / CIP 101130 / JCM 8532 / KCTC 2640 / LMG 13131 / VPI 4355</strain>
    </source>
</reference>
<organism>
    <name type="scientific">Fusobacterium nucleatum subsp. nucleatum (strain ATCC 25586 / DSM 15643 / BCRC 10681 / CIP 101130 / JCM 8532 / KCTC 2640 / LMG 13131 / VPI 4355)</name>
    <dbReference type="NCBI Taxonomy" id="190304"/>
    <lineage>
        <taxon>Bacteria</taxon>
        <taxon>Fusobacteriati</taxon>
        <taxon>Fusobacteriota</taxon>
        <taxon>Fusobacteriia</taxon>
        <taxon>Fusobacteriales</taxon>
        <taxon>Fusobacteriaceae</taxon>
        <taxon>Fusobacterium</taxon>
    </lineage>
</organism>
<evidence type="ECO:0000255" key="1">
    <source>
        <dbReference type="HAMAP-Rule" id="MF_00159"/>
    </source>
</evidence>
<name>ISPG_FUSNN</name>
<accession>Q8RG40</accession>